<accession>P86264</accession>
<feature type="peptide" id="PRO_0000371269" description="Conotoxin tx5d" evidence="1">
    <location>
        <begin position="1"/>
        <end position="15"/>
    </location>
</feature>
<feature type="modified residue" description="Threonine amide" evidence="1 2 3">
    <location>
        <position position="15"/>
    </location>
</feature>
<feature type="unsure residue" description="I or L" evidence="6">
    <location>
        <position position="2"/>
    </location>
</feature>
<feature type="unsure residue" description="I or L" evidence="6">
    <location>
        <position position="4"/>
    </location>
</feature>
<feature type="unsure residue" description="I or L" evidence="6">
    <location>
        <position position="5"/>
    </location>
</feature>
<sequence length="15" mass="1648">NIQIICCKHTPACCT</sequence>
<comment type="subcellular location">
    <subcellularLocation>
        <location evidence="1">Secreted</location>
    </subcellularLocation>
</comment>
<comment type="tissue specificity">
    <text evidence="6 7">Expressed by the venom duct (PubMed:19380747, PubMed:23031820). Is mostly present in part 5 of the venom duct (distal part near the pharynx), and less abundantly present in part 4 of the venom duct (PubMed:23031820).</text>
</comment>
<comment type="domain">
    <text evidence="5">The cysteine framework is V (CC-CC).</text>
</comment>
<comment type="PTM">
    <text evidence="1">Contains 2 disulfide bonds.</text>
</comment>
<comment type="PTM">
    <text evidence="5">Contains 2 disulfide bonds that can be either 'C1-C3, C2-C4' or 'C1-C4, C2-C3', since these disulfide connectivities have been observed for conotoxins with cysteine framework V (for examples, see AC P0DQQ7 and AC P81755)..</text>
</comment>
<comment type="mass spectrometry" mass="1641.721" error="0.02" method="Electrospray" evidence="1"/>
<comment type="similarity">
    <text evidence="5">Belongs to the conotoxin T superfamily.</text>
</comment>
<proteinExistence type="evidence at protein level"/>
<keyword id="KW-0027">Amidation</keyword>
<keyword id="KW-0903">Direct protein sequencing</keyword>
<keyword id="KW-1015">Disulfide bond</keyword>
<keyword id="KW-0528">Neurotoxin</keyword>
<keyword id="KW-0964">Secreted</keyword>
<keyword id="KW-0800">Toxin</keyword>
<name>CT5D_CONTE</name>
<organism>
    <name type="scientific">Conus textile</name>
    <name type="common">Cloth-of-gold cone</name>
    <dbReference type="NCBI Taxonomy" id="6494"/>
    <lineage>
        <taxon>Eukaryota</taxon>
        <taxon>Metazoa</taxon>
        <taxon>Spiralia</taxon>
        <taxon>Lophotrochozoa</taxon>
        <taxon>Mollusca</taxon>
        <taxon>Gastropoda</taxon>
        <taxon>Caenogastropoda</taxon>
        <taxon>Neogastropoda</taxon>
        <taxon>Conoidea</taxon>
        <taxon>Conidae</taxon>
        <taxon>Conus</taxon>
        <taxon>Cylinder</taxon>
    </lineage>
</organism>
<reference key="1">
    <citation type="journal article" date="2009" name="Proc. Natl. Acad. Sci. U.S.A.">
        <title>Rapid sensitive analysis of cysteine rich peptide venom components.</title>
        <authorList>
            <person name="Ueberheide B.M."/>
            <person name="Fenyo D."/>
            <person name="Alewood P.F."/>
            <person name="Chait B.T."/>
        </authorList>
    </citation>
    <scope>PROTEIN SEQUENCE</scope>
    <scope>SUBCELLULAR LOCATION</scope>
    <scope>MASS SPECTROMETRY</scope>
    <scope>AMIDATION AT THR-15</scope>
    <source>
        <tissue>Venom</tissue>
    </source>
</reference>
<reference key="2">
    <citation type="journal article" date="2012" name="J. Proteome Res.">
        <title>Constrained de novo sequencing of conotoxins.</title>
        <authorList>
            <person name="Bhatia S."/>
            <person name="Kil Y.J."/>
            <person name="Ueberheide B."/>
            <person name="Chait B.T."/>
            <person name="Tayo L."/>
            <person name="Cruz L."/>
            <person name="Lu B."/>
            <person name="Yates J.R. III"/>
            <person name="Bern M."/>
        </authorList>
    </citation>
    <scope>IDENTIFICATION BY MASS SPECTROMETRY</scope>
    <scope>SUBCELLULAR LOCATION</scope>
    <scope>AMIDATION AT THR-15</scope>
    <source>
        <tissue>Venom</tissue>
    </source>
</reference>
<reference key="3">
    <citation type="journal article" date="2012" name="Toxicon">
        <title>Secretion and maturation of conotoxins in the venom ducts of Conus textile.</title>
        <authorList>
            <person name="Dobson R."/>
            <person name="Collodoro M."/>
            <person name="Gilles N."/>
            <person name="Turtoi A."/>
            <person name="De Pauw E."/>
            <person name="Quinton L."/>
        </authorList>
    </citation>
    <scope>IDENTIFICATION BY MASS SPECTROMETRY</scope>
    <scope>TISSUE SPECIFICITY</scope>
    <scope>POSITION IN VENOM DUCT</scope>
    <scope>AMIDATION AT THR-15</scope>
    <source>
        <tissue>Venom</tissue>
    </source>
</reference>
<evidence type="ECO:0000269" key="1">
    <source>
    </source>
</evidence>
<evidence type="ECO:0000269" key="2">
    <source>
    </source>
</evidence>
<evidence type="ECO:0000269" key="3">
    <source>
    </source>
</evidence>
<evidence type="ECO:0000303" key="4">
    <source>
    </source>
</evidence>
<evidence type="ECO:0000305" key="5"/>
<evidence type="ECO:0000305" key="6">
    <source>
    </source>
</evidence>
<evidence type="ECO:0000305" key="7">
    <source>
    </source>
</evidence>
<dbReference type="ConoServer" id="3758">
    <property type="toxin name" value="Tx5d"/>
</dbReference>
<dbReference type="GO" id="GO:0005576">
    <property type="term" value="C:extracellular region"/>
    <property type="evidence" value="ECO:0007669"/>
    <property type="project" value="UniProtKB-SubCell"/>
</dbReference>
<dbReference type="GO" id="GO:0090729">
    <property type="term" value="F:toxin activity"/>
    <property type="evidence" value="ECO:0007669"/>
    <property type="project" value="UniProtKB-KW"/>
</dbReference>
<protein>
    <recommendedName>
        <fullName evidence="4">Conotoxin tx5d</fullName>
    </recommendedName>
    <alternativeName>
        <fullName>Trixin</fullName>
    </alternativeName>
</protein>